<evidence type="ECO:0000255" key="1">
    <source>
        <dbReference type="HAMAP-Rule" id="MF_00374"/>
    </source>
</evidence>
<evidence type="ECO:0000305" key="2"/>
<name>RL29_STRSV</name>
<organism>
    <name type="scientific">Streptococcus sanguinis (strain SK36)</name>
    <dbReference type="NCBI Taxonomy" id="388919"/>
    <lineage>
        <taxon>Bacteria</taxon>
        <taxon>Bacillati</taxon>
        <taxon>Bacillota</taxon>
        <taxon>Bacilli</taxon>
        <taxon>Lactobacillales</taxon>
        <taxon>Streptococcaceae</taxon>
        <taxon>Streptococcus</taxon>
    </lineage>
</organism>
<sequence>MKLNEVKEFVKELRGLSQEELAKRENELKKELFDLRFQAAAGQLEQTARLKEVKKQIARIKTVQSEVK</sequence>
<reference key="1">
    <citation type="journal article" date="2007" name="J. Bacteriol.">
        <title>Genome of the opportunistic pathogen Streptococcus sanguinis.</title>
        <authorList>
            <person name="Xu P."/>
            <person name="Alves J.M."/>
            <person name="Kitten T."/>
            <person name="Brown A."/>
            <person name="Chen Z."/>
            <person name="Ozaki L.S."/>
            <person name="Manque P."/>
            <person name="Ge X."/>
            <person name="Serrano M.G."/>
            <person name="Puiu D."/>
            <person name="Hendricks S."/>
            <person name="Wang Y."/>
            <person name="Chaplin M.D."/>
            <person name="Akan D."/>
            <person name="Paik S."/>
            <person name="Peterson D.L."/>
            <person name="Macrina F.L."/>
            <person name="Buck G.A."/>
        </authorList>
    </citation>
    <scope>NUCLEOTIDE SEQUENCE [LARGE SCALE GENOMIC DNA]</scope>
    <source>
        <strain>SK36</strain>
    </source>
</reference>
<dbReference type="EMBL" id="CP000387">
    <property type="protein sequence ID" value="ABN43576.1"/>
    <property type="molecule type" value="Genomic_DNA"/>
</dbReference>
<dbReference type="RefSeq" id="WP_002894488.1">
    <property type="nucleotide sequence ID" value="NZ_CAXTYR010000005.1"/>
</dbReference>
<dbReference type="RefSeq" id="YP_001034126.1">
    <property type="nucleotide sequence ID" value="NC_009009.1"/>
</dbReference>
<dbReference type="SMR" id="A3CK71"/>
<dbReference type="STRING" id="388919.SSA_0115"/>
<dbReference type="GeneID" id="48426577"/>
<dbReference type="KEGG" id="ssa:SSA_0115"/>
<dbReference type="PATRIC" id="fig|388919.9.peg.108"/>
<dbReference type="eggNOG" id="COG0255">
    <property type="taxonomic scope" value="Bacteria"/>
</dbReference>
<dbReference type="HOGENOM" id="CLU_158491_5_2_9"/>
<dbReference type="OrthoDB" id="9815192at2"/>
<dbReference type="Proteomes" id="UP000002148">
    <property type="component" value="Chromosome"/>
</dbReference>
<dbReference type="GO" id="GO:0022625">
    <property type="term" value="C:cytosolic large ribosomal subunit"/>
    <property type="evidence" value="ECO:0007669"/>
    <property type="project" value="TreeGrafter"/>
</dbReference>
<dbReference type="GO" id="GO:0003735">
    <property type="term" value="F:structural constituent of ribosome"/>
    <property type="evidence" value="ECO:0007669"/>
    <property type="project" value="InterPro"/>
</dbReference>
<dbReference type="GO" id="GO:0006412">
    <property type="term" value="P:translation"/>
    <property type="evidence" value="ECO:0007669"/>
    <property type="project" value="UniProtKB-UniRule"/>
</dbReference>
<dbReference type="CDD" id="cd00427">
    <property type="entry name" value="Ribosomal_L29_HIP"/>
    <property type="match status" value="1"/>
</dbReference>
<dbReference type="FunFam" id="1.10.287.310:FF:000001">
    <property type="entry name" value="50S ribosomal protein L29"/>
    <property type="match status" value="1"/>
</dbReference>
<dbReference type="Gene3D" id="1.10.287.310">
    <property type="match status" value="1"/>
</dbReference>
<dbReference type="HAMAP" id="MF_00374">
    <property type="entry name" value="Ribosomal_uL29"/>
    <property type="match status" value="1"/>
</dbReference>
<dbReference type="InterPro" id="IPR050063">
    <property type="entry name" value="Ribosomal_protein_uL29"/>
</dbReference>
<dbReference type="InterPro" id="IPR001854">
    <property type="entry name" value="Ribosomal_uL29"/>
</dbReference>
<dbReference type="InterPro" id="IPR018254">
    <property type="entry name" value="Ribosomal_uL29_CS"/>
</dbReference>
<dbReference type="InterPro" id="IPR036049">
    <property type="entry name" value="Ribosomal_uL29_sf"/>
</dbReference>
<dbReference type="NCBIfam" id="TIGR00012">
    <property type="entry name" value="L29"/>
    <property type="match status" value="1"/>
</dbReference>
<dbReference type="PANTHER" id="PTHR10916">
    <property type="entry name" value="60S RIBOSOMAL PROTEIN L35/50S RIBOSOMAL PROTEIN L29"/>
    <property type="match status" value="1"/>
</dbReference>
<dbReference type="PANTHER" id="PTHR10916:SF0">
    <property type="entry name" value="LARGE RIBOSOMAL SUBUNIT PROTEIN UL29C"/>
    <property type="match status" value="1"/>
</dbReference>
<dbReference type="Pfam" id="PF00831">
    <property type="entry name" value="Ribosomal_L29"/>
    <property type="match status" value="1"/>
</dbReference>
<dbReference type="SUPFAM" id="SSF46561">
    <property type="entry name" value="Ribosomal protein L29 (L29p)"/>
    <property type="match status" value="1"/>
</dbReference>
<dbReference type="PROSITE" id="PS00579">
    <property type="entry name" value="RIBOSOMAL_L29"/>
    <property type="match status" value="1"/>
</dbReference>
<protein>
    <recommendedName>
        <fullName evidence="1">Large ribosomal subunit protein uL29</fullName>
    </recommendedName>
    <alternativeName>
        <fullName evidence="2">50S ribosomal protein L29</fullName>
    </alternativeName>
</protein>
<gene>
    <name evidence="1" type="primary">rpmC</name>
    <name type="ordered locus">SSA_0115</name>
</gene>
<keyword id="KW-1185">Reference proteome</keyword>
<keyword id="KW-0687">Ribonucleoprotein</keyword>
<keyword id="KW-0689">Ribosomal protein</keyword>
<comment type="similarity">
    <text evidence="1">Belongs to the universal ribosomal protein uL29 family.</text>
</comment>
<proteinExistence type="inferred from homology"/>
<feature type="chain" id="PRO_1000007631" description="Large ribosomal subunit protein uL29">
    <location>
        <begin position="1"/>
        <end position="68"/>
    </location>
</feature>
<accession>A3CK71</accession>